<dbReference type="EC" id="2.7.7.8" evidence="1"/>
<dbReference type="EMBL" id="CP001033">
    <property type="protein sequence ID" value="ACB89805.1"/>
    <property type="status" value="ALT_INIT"/>
    <property type="molecule type" value="Genomic_DNA"/>
</dbReference>
<dbReference type="RefSeq" id="WP_001118980.1">
    <property type="nucleotide sequence ID" value="NC_010582.1"/>
</dbReference>
<dbReference type="SMR" id="B2IMQ9"/>
<dbReference type="KEGG" id="spw:SPCG_0553"/>
<dbReference type="HOGENOM" id="CLU_004217_2_2_9"/>
<dbReference type="GO" id="GO:0005829">
    <property type="term" value="C:cytosol"/>
    <property type="evidence" value="ECO:0007669"/>
    <property type="project" value="TreeGrafter"/>
</dbReference>
<dbReference type="GO" id="GO:0000175">
    <property type="term" value="F:3'-5'-RNA exonuclease activity"/>
    <property type="evidence" value="ECO:0007669"/>
    <property type="project" value="TreeGrafter"/>
</dbReference>
<dbReference type="GO" id="GO:0000287">
    <property type="term" value="F:magnesium ion binding"/>
    <property type="evidence" value="ECO:0007669"/>
    <property type="project" value="UniProtKB-UniRule"/>
</dbReference>
<dbReference type="GO" id="GO:0004654">
    <property type="term" value="F:polyribonucleotide nucleotidyltransferase activity"/>
    <property type="evidence" value="ECO:0007669"/>
    <property type="project" value="UniProtKB-UniRule"/>
</dbReference>
<dbReference type="GO" id="GO:0003723">
    <property type="term" value="F:RNA binding"/>
    <property type="evidence" value="ECO:0007669"/>
    <property type="project" value="UniProtKB-UniRule"/>
</dbReference>
<dbReference type="GO" id="GO:0006402">
    <property type="term" value="P:mRNA catabolic process"/>
    <property type="evidence" value="ECO:0007669"/>
    <property type="project" value="UniProtKB-UniRule"/>
</dbReference>
<dbReference type="GO" id="GO:0006396">
    <property type="term" value="P:RNA processing"/>
    <property type="evidence" value="ECO:0007669"/>
    <property type="project" value="InterPro"/>
</dbReference>
<dbReference type="CDD" id="cd02393">
    <property type="entry name" value="KH-I_PNPase"/>
    <property type="match status" value="1"/>
</dbReference>
<dbReference type="CDD" id="cd11363">
    <property type="entry name" value="RNase_PH_PNPase_1"/>
    <property type="match status" value="1"/>
</dbReference>
<dbReference type="CDD" id="cd11364">
    <property type="entry name" value="RNase_PH_PNPase_2"/>
    <property type="match status" value="1"/>
</dbReference>
<dbReference type="FunFam" id="2.40.50.140:FF:000023">
    <property type="entry name" value="Polyribonucleotide nucleotidyltransferase"/>
    <property type="match status" value="1"/>
</dbReference>
<dbReference type="FunFam" id="3.30.1370.10:FF:000001">
    <property type="entry name" value="Polyribonucleotide nucleotidyltransferase"/>
    <property type="match status" value="1"/>
</dbReference>
<dbReference type="FunFam" id="3.30.230.70:FF:000001">
    <property type="entry name" value="Polyribonucleotide nucleotidyltransferase"/>
    <property type="match status" value="1"/>
</dbReference>
<dbReference type="FunFam" id="3.30.230.70:FF:000002">
    <property type="entry name" value="Polyribonucleotide nucleotidyltransferase"/>
    <property type="match status" value="1"/>
</dbReference>
<dbReference type="Gene3D" id="3.30.230.70">
    <property type="entry name" value="GHMP Kinase, N-terminal domain"/>
    <property type="match status" value="2"/>
</dbReference>
<dbReference type="Gene3D" id="3.30.1370.10">
    <property type="entry name" value="K Homology domain, type 1"/>
    <property type="match status" value="1"/>
</dbReference>
<dbReference type="Gene3D" id="2.40.50.140">
    <property type="entry name" value="Nucleic acid-binding proteins"/>
    <property type="match status" value="1"/>
</dbReference>
<dbReference type="HAMAP" id="MF_01595">
    <property type="entry name" value="PNPase"/>
    <property type="match status" value="1"/>
</dbReference>
<dbReference type="InterPro" id="IPR001247">
    <property type="entry name" value="ExoRNase_PH_dom1"/>
</dbReference>
<dbReference type="InterPro" id="IPR015847">
    <property type="entry name" value="ExoRNase_PH_dom2"/>
</dbReference>
<dbReference type="InterPro" id="IPR036345">
    <property type="entry name" value="ExoRNase_PH_dom2_sf"/>
</dbReference>
<dbReference type="InterPro" id="IPR004087">
    <property type="entry name" value="KH_dom"/>
</dbReference>
<dbReference type="InterPro" id="IPR004088">
    <property type="entry name" value="KH_dom_type_1"/>
</dbReference>
<dbReference type="InterPro" id="IPR036612">
    <property type="entry name" value="KH_dom_type_1_sf"/>
</dbReference>
<dbReference type="InterPro" id="IPR012340">
    <property type="entry name" value="NA-bd_OB-fold"/>
</dbReference>
<dbReference type="InterPro" id="IPR012162">
    <property type="entry name" value="PNPase"/>
</dbReference>
<dbReference type="InterPro" id="IPR027408">
    <property type="entry name" value="PNPase/RNase_PH_dom_sf"/>
</dbReference>
<dbReference type="InterPro" id="IPR015848">
    <property type="entry name" value="PNPase_PH_RNA-bd_bac/org-type"/>
</dbReference>
<dbReference type="InterPro" id="IPR036456">
    <property type="entry name" value="PNPase_PH_RNA-bd_sf"/>
</dbReference>
<dbReference type="InterPro" id="IPR020568">
    <property type="entry name" value="Ribosomal_Su5_D2-typ_SF"/>
</dbReference>
<dbReference type="InterPro" id="IPR003029">
    <property type="entry name" value="S1_domain"/>
</dbReference>
<dbReference type="NCBIfam" id="TIGR03591">
    <property type="entry name" value="polynuc_phos"/>
    <property type="match status" value="1"/>
</dbReference>
<dbReference type="NCBIfam" id="NF008805">
    <property type="entry name" value="PRK11824.1"/>
    <property type="match status" value="1"/>
</dbReference>
<dbReference type="PANTHER" id="PTHR11252">
    <property type="entry name" value="POLYRIBONUCLEOTIDE NUCLEOTIDYLTRANSFERASE"/>
    <property type="match status" value="1"/>
</dbReference>
<dbReference type="PANTHER" id="PTHR11252:SF0">
    <property type="entry name" value="POLYRIBONUCLEOTIDE NUCLEOTIDYLTRANSFERASE 1, MITOCHONDRIAL"/>
    <property type="match status" value="1"/>
</dbReference>
<dbReference type="Pfam" id="PF00013">
    <property type="entry name" value="KH_1"/>
    <property type="match status" value="1"/>
</dbReference>
<dbReference type="Pfam" id="PF03726">
    <property type="entry name" value="PNPase"/>
    <property type="match status" value="1"/>
</dbReference>
<dbReference type="Pfam" id="PF01138">
    <property type="entry name" value="RNase_PH"/>
    <property type="match status" value="2"/>
</dbReference>
<dbReference type="Pfam" id="PF03725">
    <property type="entry name" value="RNase_PH_C"/>
    <property type="match status" value="2"/>
</dbReference>
<dbReference type="Pfam" id="PF00575">
    <property type="entry name" value="S1"/>
    <property type="match status" value="1"/>
</dbReference>
<dbReference type="PIRSF" id="PIRSF005499">
    <property type="entry name" value="PNPase"/>
    <property type="match status" value="1"/>
</dbReference>
<dbReference type="SMART" id="SM00322">
    <property type="entry name" value="KH"/>
    <property type="match status" value="1"/>
</dbReference>
<dbReference type="SMART" id="SM00316">
    <property type="entry name" value="S1"/>
    <property type="match status" value="1"/>
</dbReference>
<dbReference type="SUPFAM" id="SSF54791">
    <property type="entry name" value="Eukaryotic type KH-domain (KH-domain type I)"/>
    <property type="match status" value="1"/>
</dbReference>
<dbReference type="SUPFAM" id="SSF50249">
    <property type="entry name" value="Nucleic acid-binding proteins"/>
    <property type="match status" value="1"/>
</dbReference>
<dbReference type="SUPFAM" id="SSF46915">
    <property type="entry name" value="Polynucleotide phosphorylase/guanosine pentaphosphate synthase (PNPase/GPSI), domain 3"/>
    <property type="match status" value="1"/>
</dbReference>
<dbReference type="SUPFAM" id="SSF55666">
    <property type="entry name" value="Ribonuclease PH domain 2-like"/>
    <property type="match status" value="2"/>
</dbReference>
<dbReference type="SUPFAM" id="SSF54211">
    <property type="entry name" value="Ribosomal protein S5 domain 2-like"/>
    <property type="match status" value="2"/>
</dbReference>
<dbReference type="PROSITE" id="PS50084">
    <property type="entry name" value="KH_TYPE_1"/>
    <property type="match status" value="1"/>
</dbReference>
<dbReference type="PROSITE" id="PS50126">
    <property type="entry name" value="S1"/>
    <property type="match status" value="1"/>
</dbReference>
<gene>
    <name evidence="1" type="primary">pnp</name>
    <name type="ordered locus">SPCG_0553</name>
</gene>
<keyword id="KW-0963">Cytoplasm</keyword>
<keyword id="KW-0460">Magnesium</keyword>
<keyword id="KW-0479">Metal-binding</keyword>
<keyword id="KW-0548">Nucleotidyltransferase</keyword>
<keyword id="KW-0694">RNA-binding</keyword>
<keyword id="KW-0808">Transferase</keyword>
<feature type="chain" id="PRO_0000381921" description="Polyribonucleotide nucleotidyltransferase">
    <location>
        <begin position="1"/>
        <end position="737"/>
    </location>
</feature>
<feature type="domain" description="KH" evidence="1">
    <location>
        <begin position="556"/>
        <end position="615"/>
    </location>
</feature>
<feature type="domain" description="S1 motif" evidence="1">
    <location>
        <begin position="625"/>
        <end position="693"/>
    </location>
</feature>
<feature type="region of interest" description="Disordered" evidence="2">
    <location>
        <begin position="691"/>
        <end position="737"/>
    </location>
</feature>
<feature type="compositionally biased region" description="Basic and acidic residues" evidence="2">
    <location>
        <begin position="700"/>
        <end position="714"/>
    </location>
</feature>
<feature type="compositionally biased region" description="Basic residues" evidence="2">
    <location>
        <begin position="715"/>
        <end position="724"/>
    </location>
</feature>
<feature type="compositionally biased region" description="Basic and acidic residues" evidence="2">
    <location>
        <begin position="725"/>
        <end position="737"/>
    </location>
</feature>
<feature type="binding site" evidence="1">
    <location>
        <position position="489"/>
    </location>
    <ligand>
        <name>Mg(2+)</name>
        <dbReference type="ChEBI" id="CHEBI:18420"/>
    </ligand>
</feature>
<feature type="binding site" evidence="1">
    <location>
        <position position="495"/>
    </location>
    <ligand>
        <name>Mg(2+)</name>
        <dbReference type="ChEBI" id="CHEBI:18420"/>
    </ligand>
</feature>
<accession>B2IMQ9</accession>
<name>PNP_STRPS</name>
<sequence length="737" mass="81045">MAKQVFQTTFAGRELIVETGQVAKQANGSVVVRYGESTVLTAAVMSKKMATGDFFPLQVNYEEKMYAAGKFPGGFMKREGRPSTDATLTARLIDRPIRPMFAEGFRNEVQVINTVLSYDENASAPMAAMFGSSLALSISDIPFDGPIAGVQVGYVDGQIIINPSQEQAEQSLLELTVAGTKHAINMVESGAKELSEEIMLEALLKGHEAVKELIAFQEEIVAAVGKEKAEVELLHVDAELQAEIIAAYNSDLQKAVQVEEKLAREAATQVVKDQVTAVYEEKYADHEEFDRIMRDVAEILEQMEHAEVRRLITEDKVRPDGRKVDEIRPLDAVVDFLPRVHGSGLFTRGQTQALSVLTLAPMGETQIIDGLDPEYKKRFMHHYNFPQYSVGETGRYGAPGRREIGHGALGERALAQVLPSLEEFPYAIRLVAEVLESNGSSSQASICAGTLALMAGGVPIKAPVAGIAMGLISDGNNYTVLTDIQGLEDHFGDMDFKVAGTRDGITALQMDIKIQGITAEILTEALAQAKKARFEILDVIEATIPEVRLELAPTAPKIDTIKIDVDKIKIVIGKGGETIDKIIAETGVKIDIDEEGNVSIYSSDQDAINRAKEIIAGLVREAKVDEVYRAKVVRIEKFGAFVNLFDKTDALVHISEMAWTRTNRVEDLVEIGDEVDVKVIKIDEKGRIDASMKALLPRPPKPEHDEKGEKSERPHRPRHHKDHKPKKEFTETPKDSE</sequence>
<evidence type="ECO:0000255" key="1">
    <source>
        <dbReference type="HAMAP-Rule" id="MF_01595"/>
    </source>
</evidence>
<evidence type="ECO:0000256" key="2">
    <source>
        <dbReference type="SAM" id="MobiDB-lite"/>
    </source>
</evidence>
<evidence type="ECO:0000305" key="3"/>
<comment type="function">
    <text evidence="1">Involved in mRNA degradation. Catalyzes the phosphorolysis of single-stranded polyribonucleotides processively in the 3'- to 5'-direction.</text>
</comment>
<comment type="catalytic activity">
    <reaction evidence="1">
        <text>RNA(n+1) + phosphate = RNA(n) + a ribonucleoside 5'-diphosphate</text>
        <dbReference type="Rhea" id="RHEA:22096"/>
        <dbReference type="Rhea" id="RHEA-COMP:14527"/>
        <dbReference type="Rhea" id="RHEA-COMP:17342"/>
        <dbReference type="ChEBI" id="CHEBI:43474"/>
        <dbReference type="ChEBI" id="CHEBI:57930"/>
        <dbReference type="ChEBI" id="CHEBI:140395"/>
        <dbReference type="EC" id="2.7.7.8"/>
    </reaction>
</comment>
<comment type="cofactor">
    <cofactor evidence="1">
        <name>Mg(2+)</name>
        <dbReference type="ChEBI" id="CHEBI:18420"/>
    </cofactor>
</comment>
<comment type="subcellular location">
    <subcellularLocation>
        <location evidence="1">Cytoplasm</location>
    </subcellularLocation>
</comment>
<comment type="similarity">
    <text evidence="1">Belongs to the polyribonucleotide nucleotidyltransferase family.</text>
</comment>
<comment type="sequence caution" evidence="3">
    <conflict type="erroneous initiation">
        <sequence resource="EMBL-CDS" id="ACB89805"/>
    </conflict>
</comment>
<protein>
    <recommendedName>
        <fullName evidence="1">Polyribonucleotide nucleotidyltransferase</fullName>
        <ecNumber evidence="1">2.7.7.8</ecNumber>
    </recommendedName>
    <alternativeName>
        <fullName evidence="1">Polynucleotide phosphorylase</fullName>
        <shortName evidence="1">PNPase</shortName>
    </alternativeName>
</protein>
<reference key="1">
    <citation type="journal article" date="2009" name="BMC Genomics">
        <title>Genome evolution driven by host adaptations results in a more virulent and antimicrobial-resistant Streptococcus pneumoniae serotype 14.</title>
        <authorList>
            <person name="Ding F."/>
            <person name="Tang P."/>
            <person name="Hsu M.-H."/>
            <person name="Cui P."/>
            <person name="Hu S."/>
            <person name="Yu J."/>
            <person name="Chiu C.-H."/>
        </authorList>
    </citation>
    <scope>NUCLEOTIDE SEQUENCE [LARGE SCALE GENOMIC DNA]</scope>
    <source>
        <strain>CGSP14</strain>
    </source>
</reference>
<proteinExistence type="inferred from homology"/>
<organism>
    <name type="scientific">Streptococcus pneumoniae (strain CGSP14)</name>
    <dbReference type="NCBI Taxonomy" id="516950"/>
    <lineage>
        <taxon>Bacteria</taxon>
        <taxon>Bacillati</taxon>
        <taxon>Bacillota</taxon>
        <taxon>Bacilli</taxon>
        <taxon>Lactobacillales</taxon>
        <taxon>Streptococcaceae</taxon>
        <taxon>Streptococcus</taxon>
    </lineage>
</organism>